<reference key="1">
    <citation type="submission" date="2008-02" db="EMBL/GenBank/DDBJ databases">
        <title>Complete sequence of Escherichia coli C str. ATCC 8739.</title>
        <authorList>
            <person name="Copeland A."/>
            <person name="Lucas S."/>
            <person name="Lapidus A."/>
            <person name="Glavina del Rio T."/>
            <person name="Dalin E."/>
            <person name="Tice H."/>
            <person name="Bruce D."/>
            <person name="Goodwin L."/>
            <person name="Pitluck S."/>
            <person name="Kiss H."/>
            <person name="Brettin T."/>
            <person name="Detter J.C."/>
            <person name="Han C."/>
            <person name="Kuske C.R."/>
            <person name="Schmutz J."/>
            <person name="Larimer F."/>
            <person name="Land M."/>
            <person name="Hauser L."/>
            <person name="Kyrpides N."/>
            <person name="Mikhailova N."/>
            <person name="Ingram L."/>
            <person name="Richardson P."/>
        </authorList>
    </citation>
    <scope>NUCLEOTIDE SEQUENCE [LARGE SCALE GENOMIC DNA]</scope>
    <source>
        <strain>ATCC 8739 / DSM 1576 / NBRC 3972 / NCIMB 8545 / WDCM 00012 / Crooks</strain>
    </source>
</reference>
<dbReference type="EMBL" id="CP000946">
    <property type="protein sequence ID" value="ACA76245.1"/>
    <property type="molecule type" value="Genomic_DNA"/>
</dbReference>
<dbReference type="RefSeq" id="WP_000681905.1">
    <property type="nucleotide sequence ID" value="NZ_MTFT01000027.1"/>
</dbReference>
<dbReference type="SMR" id="B1IRI6"/>
<dbReference type="KEGG" id="ecl:EcolC_0568"/>
<dbReference type="HOGENOM" id="CLU_053334_0_0_6"/>
<dbReference type="UniPathway" id="UPA00704">
    <property type="reaction ID" value="UER00716"/>
</dbReference>
<dbReference type="GO" id="GO:0005886">
    <property type="term" value="C:plasma membrane"/>
    <property type="evidence" value="ECO:0007669"/>
    <property type="project" value="TreeGrafter"/>
</dbReference>
<dbReference type="GO" id="GO:0005975">
    <property type="term" value="P:carbohydrate metabolic process"/>
    <property type="evidence" value="ECO:0007669"/>
    <property type="project" value="InterPro"/>
</dbReference>
<dbReference type="GO" id="GO:2001059">
    <property type="term" value="P:D-tagatose 6-phosphate catabolic process"/>
    <property type="evidence" value="ECO:0007669"/>
    <property type="project" value="UniProtKB-UniRule"/>
</dbReference>
<dbReference type="GO" id="GO:0009401">
    <property type="term" value="P:phosphoenolpyruvate-dependent sugar phosphotransferase system"/>
    <property type="evidence" value="ECO:0007669"/>
    <property type="project" value="TreeGrafter"/>
</dbReference>
<dbReference type="Gene3D" id="3.20.20.70">
    <property type="entry name" value="Aldolase class I"/>
    <property type="match status" value="1"/>
</dbReference>
<dbReference type="Gene3D" id="1.10.400.20">
    <property type="entry name" value="putative tagatose 6-phosphate kinase domain like"/>
    <property type="match status" value="1"/>
</dbReference>
<dbReference type="HAMAP" id="MF_01295">
    <property type="entry name" value="Tagatose_aldol_KbaZ"/>
    <property type="match status" value="1"/>
</dbReference>
<dbReference type="InterPro" id="IPR013785">
    <property type="entry name" value="Aldolase_TIM"/>
</dbReference>
<dbReference type="InterPro" id="IPR012062">
    <property type="entry name" value="GatZ/KbaZ-like"/>
</dbReference>
<dbReference type="InterPro" id="IPR050303">
    <property type="entry name" value="GatZ_KbaZ_carbometab"/>
</dbReference>
<dbReference type="InterPro" id="IPR023435">
    <property type="entry name" value="TagBP_ald_KbaZ"/>
</dbReference>
<dbReference type="NCBIfam" id="TIGR02810">
    <property type="entry name" value="agaZ_gatZ"/>
    <property type="match status" value="1"/>
</dbReference>
<dbReference type="NCBIfam" id="NF012002">
    <property type="entry name" value="PRK15458.1"/>
    <property type="match status" value="1"/>
</dbReference>
<dbReference type="PANTHER" id="PTHR32502:SF2">
    <property type="entry name" value="D-TAGATOSE-1,6-BISPHOSPHATE ALDOLASE SUBUNIT KBAZ"/>
    <property type="match status" value="1"/>
</dbReference>
<dbReference type="PANTHER" id="PTHR32502">
    <property type="entry name" value="N-ACETYLGALACTOSAMINE PERMEASE II COMPONENT-RELATED"/>
    <property type="match status" value="1"/>
</dbReference>
<dbReference type="Pfam" id="PF08013">
    <property type="entry name" value="GatZ_KbaZ-like"/>
    <property type="match status" value="1"/>
</dbReference>
<dbReference type="PIRSF" id="PIRSF009264">
    <property type="entry name" value="TagBP_ald_AgaZ"/>
    <property type="match status" value="1"/>
</dbReference>
<dbReference type="SUPFAM" id="SSF51569">
    <property type="entry name" value="Aldolase"/>
    <property type="match status" value="1"/>
</dbReference>
<accession>B1IRI6</accession>
<feature type="chain" id="PRO_0000372525" description="D-tagatose-1,6-bisphosphate aldolase subunit KbaZ">
    <location>
        <begin position="1"/>
        <end position="426"/>
    </location>
</feature>
<sequence length="426" mass="47235">MKHLTEMVRQHKAGKTNAIYAVCSAHPLVLEAAIRYASANQTPLLIEATSNQVDQFGGYTGMTPADFRGFVCQLADSLNFPQDALILGGDHLGPNRWQNLPAAQAMANADDLIKSYVAAGFKKIHLDCSMSCQDDPIPLTDDIVAERAARLAKVAEETCLEHFGEADLEYVIGTEVPVPGGAHETLSELAVTTPDAARATLEAHRHAFEKQGLNAIWPRIIALVVQPGVEFDHTNVIDYQPAKASALSQMVENYETLIFEAHSTDYQTPQSLRQLVIDHFAILKVGPALTFALREALFSLAAIEEELVPAKVCSGLRQVLEDVMLDRPEYWQSHYHGDGNARRLARGYSYSDRVRYYWPDSQIDDAFAHLVRNLADSPIPLPLISQYLPLQYVKVRSGELQPTPRELIINHIQDILAQYHTACEGQ</sequence>
<protein>
    <recommendedName>
        <fullName evidence="1">D-tagatose-1,6-bisphosphate aldolase subunit KbaZ</fullName>
    </recommendedName>
</protein>
<organism>
    <name type="scientific">Escherichia coli (strain ATCC 8739 / DSM 1576 / NBRC 3972 / NCIMB 8545 / WDCM 00012 / Crooks)</name>
    <dbReference type="NCBI Taxonomy" id="481805"/>
    <lineage>
        <taxon>Bacteria</taxon>
        <taxon>Pseudomonadati</taxon>
        <taxon>Pseudomonadota</taxon>
        <taxon>Gammaproteobacteria</taxon>
        <taxon>Enterobacterales</taxon>
        <taxon>Enterobacteriaceae</taxon>
        <taxon>Escherichia</taxon>
    </lineage>
</organism>
<gene>
    <name evidence="1" type="primary">kbaZ</name>
    <name type="ordered locus">EcolC_0568</name>
</gene>
<name>KBAZ_ECOLC</name>
<comment type="function">
    <text evidence="1">Component of the tagatose-1,6-bisphosphate aldolase KbaYZ that is required for full activity and stability of the Y subunit. Could have a chaperone-like function for the proper and stable folding of KbaY. When expressed alone, KbaZ does not show any aldolase activity.</text>
</comment>
<comment type="pathway">
    <text evidence="1">Carbohydrate metabolism; D-tagatose 6-phosphate degradation; D-glyceraldehyde 3-phosphate and glycerone phosphate from D-tagatose 6-phosphate: step 2/2.</text>
</comment>
<comment type="subunit">
    <text evidence="1">Forms a complex with KbaY.</text>
</comment>
<comment type="similarity">
    <text evidence="1">Belongs to the GatZ/KbaZ family. KbaZ subfamily.</text>
</comment>
<proteinExistence type="inferred from homology"/>
<evidence type="ECO:0000255" key="1">
    <source>
        <dbReference type="HAMAP-Rule" id="MF_01295"/>
    </source>
</evidence>